<organism>
    <name type="scientific">Geobacillus thermodenitrificans (strain NG80-2)</name>
    <dbReference type="NCBI Taxonomy" id="420246"/>
    <lineage>
        <taxon>Bacteria</taxon>
        <taxon>Bacillati</taxon>
        <taxon>Bacillota</taxon>
        <taxon>Bacilli</taxon>
        <taxon>Bacillales</taxon>
        <taxon>Anoxybacillaceae</taxon>
        <taxon>Geobacillus</taxon>
    </lineage>
</organism>
<sequence length="343" mass="36937">MENITVLGAGSWGTALALVLADNGHRVRLWSHRAEQVREINEQRTNEKYLPGVRLPEVIIGYDDLGAALDGVSIVVLAVPTKAIREVLQRARMCLAAPITIVAVSKGIEPGTHKRVSEIVTEEISEWLEDVVVLSGPSHAEEVVLRHPTTVAVSSPNMEAAQCIQDVFMNHHYFRVYTNPDLVGVEVGGALKNIIALAAGISDGLGYGDNAKAALITRGLAEIARLGCALGANPLTFAGLAGVGDLIVTCTSVHSRNWRAGHMLGQGKKLDDVLESMGMVVEGVRTTKAAYELAKELGVKMPITEVLYEVLFDGKNPKEAVDSLMARGKKQEMNDLMNIFAEQ</sequence>
<feature type="chain" id="PRO_1000049509" description="Glycerol-3-phosphate dehydrogenase [NAD(P)+]">
    <location>
        <begin position="1"/>
        <end position="343"/>
    </location>
</feature>
<feature type="active site" description="Proton acceptor" evidence="1">
    <location>
        <position position="192"/>
    </location>
</feature>
<feature type="binding site" evidence="1">
    <location>
        <position position="11"/>
    </location>
    <ligand>
        <name>NADPH</name>
        <dbReference type="ChEBI" id="CHEBI:57783"/>
    </ligand>
</feature>
<feature type="binding site" evidence="1">
    <location>
        <position position="12"/>
    </location>
    <ligand>
        <name>NADPH</name>
        <dbReference type="ChEBI" id="CHEBI:57783"/>
    </ligand>
</feature>
<feature type="binding site" evidence="1">
    <location>
        <position position="32"/>
    </location>
    <ligand>
        <name>NADPH</name>
        <dbReference type="ChEBI" id="CHEBI:57783"/>
    </ligand>
</feature>
<feature type="binding site" evidence="1">
    <location>
        <position position="33"/>
    </location>
    <ligand>
        <name>NADPH</name>
        <dbReference type="ChEBI" id="CHEBI:57783"/>
    </ligand>
</feature>
<feature type="binding site" evidence="1">
    <location>
        <position position="106"/>
    </location>
    <ligand>
        <name>NADPH</name>
        <dbReference type="ChEBI" id="CHEBI:57783"/>
    </ligand>
</feature>
<feature type="binding site" evidence="1">
    <location>
        <position position="106"/>
    </location>
    <ligand>
        <name>sn-glycerol 3-phosphate</name>
        <dbReference type="ChEBI" id="CHEBI:57597"/>
    </ligand>
</feature>
<feature type="binding site" evidence="1">
    <location>
        <position position="136"/>
    </location>
    <ligand>
        <name>sn-glycerol 3-phosphate</name>
        <dbReference type="ChEBI" id="CHEBI:57597"/>
    </ligand>
</feature>
<feature type="binding site" evidence="1">
    <location>
        <position position="138"/>
    </location>
    <ligand>
        <name>sn-glycerol 3-phosphate</name>
        <dbReference type="ChEBI" id="CHEBI:57597"/>
    </ligand>
</feature>
<feature type="binding site" evidence="1">
    <location>
        <position position="140"/>
    </location>
    <ligand>
        <name>NADPH</name>
        <dbReference type="ChEBI" id="CHEBI:57783"/>
    </ligand>
</feature>
<feature type="binding site" evidence="1">
    <location>
        <position position="192"/>
    </location>
    <ligand>
        <name>sn-glycerol 3-phosphate</name>
        <dbReference type="ChEBI" id="CHEBI:57597"/>
    </ligand>
</feature>
<feature type="binding site" evidence="1">
    <location>
        <position position="245"/>
    </location>
    <ligand>
        <name>sn-glycerol 3-phosphate</name>
        <dbReference type="ChEBI" id="CHEBI:57597"/>
    </ligand>
</feature>
<feature type="binding site" evidence="1">
    <location>
        <position position="255"/>
    </location>
    <ligand>
        <name>sn-glycerol 3-phosphate</name>
        <dbReference type="ChEBI" id="CHEBI:57597"/>
    </ligand>
</feature>
<feature type="binding site" evidence="1">
    <location>
        <position position="256"/>
    </location>
    <ligand>
        <name>NADPH</name>
        <dbReference type="ChEBI" id="CHEBI:57783"/>
    </ligand>
</feature>
<feature type="binding site" evidence="1">
    <location>
        <position position="256"/>
    </location>
    <ligand>
        <name>sn-glycerol 3-phosphate</name>
        <dbReference type="ChEBI" id="CHEBI:57597"/>
    </ligand>
</feature>
<feature type="binding site" evidence="1">
    <location>
        <position position="257"/>
    </location>
    <ligand>
        <name>sn-glycerol 3-phosphate</name>
        <dbReference type="ChEBI" id="CHEBI:57597"/>
    </ligand>
</feature>
<feature type="binding site" evidence="1">
    <location>
        <position position="280"/>
    </location>
    <ligand>
        <name>NADPH</name>
        <dbReference type="ChEBI" id="CHEBI:57783"/>
    </ligand>
</feature>
<feature type="binding site" evidence="1">
    <location>
        <position position="282"/>
    </location>
    <ligand>
        <name>NADPH</name>
        <dbReference type="ChEBI" id="CHEBI:57783"/>
    </ligand>
</feature>
<protein>
    <recommendedName>
        <fullName evidence="1">Glycerol-3-phosphate dehydrogenase [NAD(P)+]</fullName>
        <ecNumber evidence="1">1.1.1.94</ecNumber>
    </recommendedName>
    <alternativeName>
        <fullName evidence="1">NAD(P)(+)-dependent glycerol-3-phosphate dehydrogenase</fullName>
    </alternativeName>
    <alternativeName>
        <fullName evidence="1">NAD(P)H-dependent dihydroxyacetone-phosphate reductase</fullName>
    </alternativeName>
</protein>
<reference key="1">
    <citation type="journal article" date="2007" name="Proc. Natl. Acad. Sci. U.S.A.">
        <title>Genome and proteome of long-chain alkane degrading Geobacillus thermodenitrificans NG80-2 isolated from a deep-subsurface oil reservoir.</title>
        <authorList>
            <person name="Feng L."/>
            <person name="Wang W."/>
            <person name="Cheng J."/>
            <person name="Ren Y."/>
            <person name="Zhao G."/>
            <person name="Gao C."/>
            <person name="Tang Y."/>
            <person name="Liu X."/>
            <person name="Han W."/>
            <person name="Peng X."/>
            <person name="Liu R."/>
            <person name="Wang L."/>
        </authorList>
    </citation>
    <scope>NUCLEOTIDE SEQUENCE [LARGE SCALE GENOMIC DNA]</scope>
    <source>
        <strain>NG80-2</strain>
    </source>
</reference>
<accession>A4IQA1</accession>
<keyword id="KW-0963">Cytoplasm</keyword>
<keyword id="KW-0444">Lipid biosynthesis</keyword>
<keyword id="KW-0443">Lipid metabolism</keyword>
<keyword id="KW-0520">NAD</keyword>
<keyword id="KW-0521">NADP</keyword>
<keyword id="KW-0547">Nucleotide-binding</keyword>
<keyword id="KW-0560">Oxidoreductase</keyword>
<keyword id="KW-0594">Phospholipid biosynthesis</keyword>
<keyword id="KW-1208">Phospholipid metabolism</keyword>
<proteinExistence type="inferred from homology"/>
<name>GPDA_GEOTN</name>
<comment type="function">
    <text evidence="1">Catalyzes the reduction of the glycolytic intermediate dihydroxyacetone phosphate (DHAP) to sn-glycerol 3-phosphate (G3P), the key precursor for phospholipid synthesis.</text>
</comment>
<comment type="catalytic activity">
    <reaction evidence="1">
        <text>sn-glycerol 3-phosphate + NAD(+) = dihydroxyacetone phosphate + NADH + H(+)</text>
        <dbReference type="Rhea" id="RHEA:11092"/>
        <dbReference type="ChEBI" id="CHEBI:15378"/>
        <dbReference type="ChEBI" id="CHEBI:57540"/>
        <dbReference type="ChEBI" id="CHEBI:57597"/>
        <dbReference type="ChEBI" id="CHEBI:57642"/>
        <dbReference type="ChEBI" id="CHEBI:57945"/>
        <dbReference type="EC" id="1.1.1.94"/>
    </reaction>
    <physiologicalReaction direction="right-to-left" evidence="1">
        <dbReference type="Rhea" id="RHEA:11094"/>
    </physiologicalReaction>
</comment>
<comment type="catalytic activity">
    <reaction evidence="1">
        <text>sn-glycerol 3-phosphate + NADP(+) = dihydroxyacetone phosphate + NADPH + H(+)</text>
        <dbReference type="Rhea" id="RHEA:11096"/>
        <dbReference type="ChEBI" id="CHEBI:15378"/>
        <dbReference type="ChEBI" id="CHEBI:57597"/>
        <dbReference type="ChEBI" id="CHEBI:57642"/>
        <dbReference type="ChEBI" id="CHEBI:57783"/>
        <dbReference type="ChEBI" id="CHEBI:58349"/>
        <dbReference type="EC" id="1.1.1.94"/>
    </reaction>
    <physiologicalReaction direction="right-to-left" evidence="1">
        <dbReference type="Rhea" id="RHEA:11098"/>
    </physiologicalReaction>
</comment>
<comment type="pathway">
    <text evidence="1">Membrane lipid metabolism; glycerophospholipid metabolism.</text>
</comment>
<comment type="subcellular location">
    <subcellularLocation>
        <location evidence="1">Cytoplasm</location>
    </subcellularLocation>
</comment>
<comment type="similarity">
    <text evidence="1">Belongs to the NAD-dependent glycerol-3-phosphate dehydrogenase family.</text>
</comment>
<evidence type="ECO:0000255" key="1">
    <source>
        <dbReference type="HAMAP-Rule" id="MF_00394"/>
    </source>
</evidence>
<gene>
    <name evidence="1" type="primary">gpsA</name>
    <name type="ordered locus">GTNG_2153</name>
</gene>
<dbReference type="EC" id="1.1.1.94" evidence="1"/>
<dbReference type="EMBL" id="CP000557">
    <property type="protein sequence ID" value="ABO67505.1"/>
    <property type="molecule type" value="Genomic_DNA"/>
</dbReference>
<dbReference type="RefSeq" id="WP_008879627.1">
    <property type="nucleotide sequence ID" value="NC_009328.1"/>
</dbReference>
<dbReference type="SMR" id="A4IQA1"/>
<dbReference type="KEGG" id="gtn:GTNG_2153"/>
<dbReference type="eggNOG" id="COG0240">
    <property type="taxonomic scope" value="Bacteria"/>
</dbReference>
<dbReference type="HOGENOM" id="CLU_033449_0_2_9"/>
<dbReference type="UniPathway" id="UPA00940"/>
<dbReference type="Proteomes" id="UP000001578">
    <property type="component" value="Chromosome"/>
</dbReference>
<dbReference type="GO" id="GO:0005829">
    <property type="term" value="C:cytosol"/>
    <property type="evidence" value="ECO:0007669"/>
    <property type="project" value="TreeGrafter"/>
</dbReference>
<dbReference type="GO" id="GO:0047952">
    <property type="term" value="F:glycerol-3-phosphate dehydrogenase [NAD(P)+] activity"/>
    <property type="evidence" value="ECO:0007669"/>
    <property type="project" value="UniProtKB-UniRule"/>
</dbReference>
<dbReference type="GO" id="GO:0051287">
    <property type="term" value="F:NAD binding"/>
    <property type="evidence" value="ECO:0007669"/>
    <property type="project" value="InterPro"/>
</dbReference>
<dbReference type="GO" id="GO:0005975">
    <property type="term" value="P:carbohydrate metabolic process"/>
    <property type="evidence" value="ECO:0007669"/>
    <property type="project" value="InterPro"/>
</dbReference>
<dbReference type="GO" id="GO:0046167">
    <property type="term" value="P:glycerol-3-phosphate biosynthetic process"/>
    <property type="evidence" value="ECO:0007669"/>
    <property type="project" value="UniProtKB-UniRule"/>
</dbReference>
<dbReference type="GO" id="GO:0046168">
    <property type="term" value="P:glycerol-3-phosphate catabolic process"/>
    <property type="evidence" value="ECO:0007669"/>
    <property type="project" value="InterPro"/>
</dbReference>
<dbReference type="GO" id="GO:0006650">
    <property type="term" value="P:glycerophospholipid metabolic process"/>
    <property type="evidence" value="ECO:0007669"/>
    <property type="project" value="UniProtKB-UniRule"/>
</dbReference>
<dbReference type="GO" id="GO:0008654">
    <property type="term" value="P:phospholipid biosynthetic process"/>
    <property type="evidence" value="ECO:0007669"/>
    <property type="project" value="UniProtKB-KW"/>
</dbReference>
<dbReference type="FunFam" id="1.10.1040.10:FF:000001">
    <property type="entry name" value="Glycerol-3-phosphate dehydrogenase [NAD(P)+]"/>
    <property type="match status" value="1"/>
</dbReference>
<dbReference type="FunFam" id="3.40.50.720:FF:000019">
    <property type="entry name" value="Glycerol-3-phosphate dehydrogenase [NAD(P)+]"/>
    <property type="match status" value="1"/>
</dbReference>
<dbReference type="Gene3D" id="1.10.1040.10">
    <property type="entry name" value="N-(1-d-carboxylethyl)-l-norvaline Dehydrogenase, domain 2"/>
    <property type="match status" value="1"/>
</dbReference>
<dbReference type="Gene3D" id="3.40.50.720">
    <property type="entry name" value="NAD(P)-binding Rossmann-like Domain"/>
    <property type="match status" value="1"/>
</dbReference>
<dbReference type="HAMAP" id="MF_00394">
    <property type="entry name" value="NAD_Glyc3P_dehydrog"/>
    <property type="match status" value="1"/>
</dbReference>
<dbReference type="InterPro" id="IPR008927">
    <property type="entry name" value="6-PGluconate_DH-like_C_sf"/>
</dbReference>
<dbReference type="InterPro" id="IPR013328">
    <property type="entry name" value="6PGD_dom2"/>
</dbReference>
<dbReference type="InterPro" id="IPR006168">
    <property type="entry name" value="G3P_DH_NAD-dep"/>
</dbReference>
<dbReference type="InterPro" id="IPR006109">
    <property type="entry name" value="G3P_DH_NAD-dep_C"/>
</dbReference>
<dbReference type="InterPro" id="IPR011128">
    <property type="entry name" value="G3P_DH_NAD-dep_N"/>
</dbReference>
<dbReference type="InterPro" id="IPR036291">
    <property type="entry name" value="NAD(P)-bd_dom_sf"/>
</dbReference>
<dbReference type="NCBIfam" id="NF000940">
    <property type="entry name" value="PRK00094.1-2"/>
    <property type="match status" value="1"/>
</dbReference>
<dbReference type="NCBIfam" id="NF000941">
    <property type="entry name" value="PRK00094.1-3"/>
    <property type="match status" value="1"/>
</dbReference>
<dbReference type="NCBIfam" id="NF000942">
    <property type="entry name" value="PRK00094.1-4"/>
    <property type="match status" value="1"/>
</dbReference>
<dbReference type="PANTHER" id="PTHR11728">
    <property type="entry name" value="GLYCEROL-3-PHOSPHATE DEHYDROGENASE"/>
    <property type="match status" value="1"/>
</dbReference>
<dbReference type="PANTHER" id="PTHR11728:SF1">
    <property type="entry name" value="GLYCEROL-3-PHOSPHATE DEHYDROGENASE [NAD(+)] 2, CHLOROPLASTIC"/>
    <property type="match status" value="1"/>
</dbReference>
<dbReference type="Pfam" id="PF07479">
    <property type="entry name" value="NAD_Gly3P_dh_C"/>
    <property type="match status" value="1"/>
</dbReference>
<dbReference type="Pfam" id="PF01210">
    <property type="entry name" value="NAD_Gly3P_dh_N"/>
    <property type="match status" value="1"/>
</dbReference>
<dbReference type="PIRSF" id="PIRSF000114">
    <property type="entry name" value="Glycerol-3-P_dh"/>
    <property type="match status" value="1"/>
</dbReference>
<dbReference type="PRINTS" id="PR00077">
    <property type="entry name" value="GPDHDRGNASE"/>
</dbReference>
<dbReference type="SUPFAM" id="SSF48179">
    <property type="entry name" value="6-phosphogluconate dehydrogenase C-terminal domain-like"/>
    <property type="match status" value="1"/>
</dbReference>
<dbReference type="SUPFAM" id="SSF51735">
    <property type="entry name" value="NAD(P)-binding Rossmann-fold domains"/>
    <property type="match status" value="1"/>
</dbReference>
<dbReference type="PROSITE" id="PS00957">
    <property type="entry name" value="NAD_G3PDH"/>
    <property type="match status" value="1"/>
</dbReference>